<gene>
    <name type="primary">Prl6a1</name>
    <name type="synonym">Prlpb</name>
</gene>
<comment type="subcellular location">
    <subcellularLocation>
        <location evidence="1">Secreted</location>
    </subcellularLocation>
</comment>
<comment type="tissue specificity">
    <text evidence="3 4">Expressed in both placenta and decidual tissues. Detected first in deciduals cells early in gestation and in trophoblasts later in pregnancy.</text>
</comment>
<comment type="developmental stage">
    <text evidence="3 4">Increased gradually from days 8-12 and decrease to low levels by days 16.</text>
</comment>
<comment type="similarity">
    <text evidence="5">Belongs to the somatotropin/prolactin family.</text>
</comment>
<protein>
    <recommendedName>
        <fullName>Prolactin-6A1</fullName>
    </recommendedName>
    <alternativeName>
        <fullName>Placental prolactin-like protein B</fullName>
        <shortName>PLP-B</shortName>
        <shortName>PRL-like protein B</shortName>
    </alternativeName>
</protein>
<name>PR6A1_MOUSE</name>
<dbReference type="EMBL" id="AF011384">
    <property type="protein sequence ID" value="AAB92400.1"/>
    <property type="molecule type" value="mRNA"/>
</dbReference>
<dbReference type="EMBL" id="AF015563">
    <property type="protein sequence ID" value="AAB68825.1"/>
    <property type="molecule type" value="mRNA"/>
</dbReference>
<dbReference type="EMBL" id="AL592443">
    <property type="status" value="NOT_ANNOTATED_CDS"/>
    <property type="molecule type" value="Genomic_DNA"/>
</dbReference>
<dbReference type="CCDS" id="CCDS26395.1"/>
<dbReference type="RefSeq" id="NP_035296.1">
    <property type="nucleotide sequence ID" value="NM_011166.2"/>
</dbReference>
<dbReference type="SMR" id="O35257"/>
<dbReference type="FunCoup" id="O35257">
    <property type="interactions" value="1208"/>
</dbReference>
<dbReference type="STRING" id="10090.ENSMUSP00000089269"/>
<dbReference type="GlyCosmos" id="O35257">
    <property type="glycosylation" value="1 site, No reported glycans"/>
</dbReference>
<dbReference type="GlyGen" id="O35257">
    <property type="glycosylation" value="1 site"/>
</dbReference>
<dbReference type="PaxDb" id="10090-ENSMUSP00000089269"/>
<dbReference type="DNASU" id="19111"/>
<dbReference type="Ensembl" id="ENSMUST00000091680.9">
    <property type="protein sequence ID" value="ENSMUSP00000089269.3"/>
    <property type="gene ID" value="ENSMUSG00000069259.11"/>
</dbReference>
<dbReference type="GeneID" id="19111"/>
<dbReference type="KEGG" id="mmu:19111"/>
<dbReference type="UCSC" id="uc007pxk.2">
    <property type="organism name" value="mouse"/>
</dbReference>
<dbReference type="AGR" id="MGI:1206579"/>
<dbReference type="CTD" id="19111"/>
<dbReference type="MGI" id="MGI:1206579">
    <property type="gene designation" value="Prl6a1"/>
</dbReference>
<dbReference type="VEuPathDB" id="HostDB:ENSMUSG00000069259"/>
<dbReference type="eggNOG" id="ENOG502QYU3">
    <property type="taxonomic scope" value="Eukaryota"/>
</dbReference>
<dbReference type="GeneTree" id="ENSGT00950000182818"/>
<dbReference type="HOGENOM" id="CLU_088274_0_1_1"/>
<dbReference type="InParanoid" id="O35257"/>
<dbReference type="OMA" id="SHMEDAP"/>
<dbReference type="OrthoDB" id="9580234at2759"/>
<dbReference type="TreeFam" id="TF332592"/>
<dbReference type="BioGRID-ORCS" id="19111">
    <property type="hits" value="3 hits in 76 CRISPR screens"/>
</dbReference>
<dbReference type="PRO" id="PR:O35257"/>
<dbReference type="Proteomes" id="UP000000589">
    <property type="component" value="Chromosome 13"/>
</dbReference>
<dbReference type="RNAct" id="O35257">
    <property type="molecule type" value="protein"/>
</dbReference>
<dbReference type="Bgee" id="ENSMUSG00000069259">
    <property type="expression patterns" value="Expressed in ectoplacental cone and 9 other cell types or tissues"/>
</dbReference>
<dbReference type="ExpressionAtlas" id="O35257">
    <property type="expression patterns" value="baseline and differential"/>
</dbReference>
<dbReference type="GO" id="GO:0005576">
    <property type="term" value="C:extracellular region"/>
    <property type="evidence" value="ECO:0007669"/>
    <property type="project" value="UniProtKB-SubCell"/>
</dbReference>
<dbReference type="GO" id="GO:0005179">
    <property type="term" value="F:hormone activity"/>
    <property type="evidence" value="ECO:0007669"/>
    <property type="project" value="UniProtKB-KW"/>
</dbReference>
<dbReference type="CDD" id="cd10288">
    <property type="entry name" value="prolactin_like"/>
    <property type="match status" value="1"/>
</dbReference>
<dbReference type="FunFam" id="1.20.1250.10:FF:000059">
    <property type="entry name" value="Growth hormone d13"/>
    <property type="match status" value="1"/>
</dbReference>
<dbReference type="Gene3D" id="1.20.1250.10">
    <property type="match status" value="1"/>
</dbReference>
<dbReference type="InterPro" id="IPR009079">
    <property type="entry name" value="4_helix_cytokine-like_core"/>
</dbReference>
<dbReference type="InterPro" id="IPR001400">
    <property type="entry name" value="Somatotropin/Prolactin"/>
</dbReference>
<dbReference type="PANTHER" id="PTHR11417:SF10">
    <property type="entry name" value="PROLACTIN-6A1"/>
    <property type="match status" value="1"/>
</dbReference>
<dbReference type="PANTHER" id="PTHR11417">
    <property type="entry name" value="SOMATOTROPIN,PROLACTIN"/>
    <property type="match status" value="1"/>
</dbReference>
<dbReference type="Pfam" id="PF00103">
    <property type="entry name" value="Hormone_1"/>
    <property type="match status" value="1"/>
</dbReference>
<dbReference type="PRINTS" id="PR00836">
    <property type="entry name" value="SOMATOTROPIN"/>
</dbReference>
<dbReference type="SUPFAM" id="SSF47266">
    <property type="entry name" value="4-helical cytokines"/>
    <property type="match status" value="1"/>
</dbReference>
<accession>O35257</accession>
<organism>
    <name type="scientific">Mus musculus</name>
    <name type="common">Mouse</name>
    <dbReference type="NCBI Taxonomy" id="10090"/>
    <lineage>
        <taxon>Eukaryota</taxon>
        <taxon>Metazoa</taxon>
        <taxon>Chordata</taxon>
        <taxon>Craniata</taxon>
        <taxon>Vertebrata</taxon>
        <taxon>Euteleostomi</taxon>
        <taxon>Mammalia</taxon>
        <taxon>Eutheria</taxon>
        <taxon>Euarchontoglires</taxon>
        <taxon>Glires</taxon>
        <taxon>Rodentia</taxon>
        <taxon>Myomorpha</taxon>
        <taxon>Muroidea</taxon>
        <taxon>Muridae</taxon>
        <taxon>Murinae</taxon>
        <taxon>Mus</taxon>
        <taxon>Mus</taxon>
    </lineage>
</organism>
<proteinExistence type="evidence at transcript level"/>
<evidence type="ECO:0000250" key="1"/>
<evidence type="ECO:0000255" key="2"/>
<evidence type="ECO:0000269" key="3">
    <source>
    </source>
</evidence>
<evidence type="ECO:0000269" key="4">
    <source>
    </source>
</evidence>
<evidence type="ECO:0000305" key="5"/>
<feature type="signal peptide" evidence="2">
    <location>
        <begin position="1"/>
        <end position="29"/>
    </location>
</feature>
<feature type="chain" id="PRO_0000045210" description="Prolactin-6A1">
    <location>
        <begin position="30"/>
        <end position="230"/>
    </location>
</feature>
<feature type="glycosylation site" description="N-linked (GlcNAc...) asparagine" evidence="2">
    <location>
        <position position="57"/>
    </location>
</feature>
<feature type="disulfide bond" evidence="1">
    <location>
        <begin position="89"/>
        <end position="205"/>
    </location>
</feature>
<feature type="disulfide bond" evidence="1">
    <location>
        <begin position="222"/>
        <end position="230"/>
    </location>
</feature>
<reference key="1">
    <citation type="journal article" date="1997" name="Endocrinology">
        <title>Three new members of the mouse prolactin/growth hormone family are homologous to proteins expressed in the rat.</title>
        <authorList>
            <person name="Lin J."/>
            <person name="Poole J."/>
            <person name="Linzer D.I."/>
        </authorList>
    </citation>
    <scope>NUCLEOTIDE SEQUENCE [MRNA]</scope>
    <scope>DEVELOPMENTAL STAGE</scope>
    <scope>TISSUE SPECIFICITY</scope>
    <source>
        <strain>C57BL/6J</strain>
    </source>
</reference>
<reference key="2">
    <citation type="journal article" date="1998" name="Biol. Reprod.">
        <title>Homologues for prolactin-like proteins A and B are present in the mouse.</title>
        <authorList>
            <person name="Mueller H."/>
            <person name="Ishimura R."/>
            <person name="Orwig K.E."/>
            <person name="Liu B."/>
            <person name="Soares M.J."/>
        </authorList>
    </citation>
    <scope>NUCLEOTIDE SEQUENCE [MRNA]</scope>
    <scope>DEVELOPMENTAL STAGE</scope>
    <scope>TISSUE SPECIFICITY</scope>
</reference>
<reference key="3">
    <citation type="journal article" date="2009" name="PLoS Biol.">
        <title>Lineage-specific biology revealed by a finished genome assembly of the mouse.</title>
        <authorList>
            <person name="Church D.M."/>
            <person name="Goodstadt L."/>
            <person name="Hillier L.W."/>
            <person name="Zody M.C."/>
            <person name="Goldstein S."/>
            <person name="She X."/>
            <person name="Bult C.J."/>
            <person name="Agarwala R."/>
            <person name="Cherry J.L."/>
            <person name="DiCuccio M."/>
            <person name="Hlavina W."/>
            <person name="Kapustin Y."/>
            <person name="Meric P."/>
            <person name="Maglott D."/>
            <person name="Birtle Z."/>
            <person name="Marques A.C."/>
            <person name="Graves T."/>
            <person name="Zhou S."/>
            <person name="Teague B."/>
            <person name="Potamousis K."/>
            <person name="Churas C."/>
            <person name="Place M."/>
            <person name="Herschleb J."/>
            <person name="Runnheim R."/>
            <person name="Forrest D."/>
            <person name="Amos-Landgraf J."/>
            <person name="Schwartz D.C."/>
            <person name="Cheng Z."/>
            <person name="Lindblad-Toh K."/>
            <person name="Eichler E.E."/>
            <person name="Ponting C.P."/>
        </authorList>
    </citation>
    <scope>NUCLEOTIDE SEQUENCE [LARGE SCALE GENOMIC DNA]</scope>
    <source>
        <strain>C57BL/6J</strain>
    </source>
</reference>
<sequence>MLSLSQPCFSGTLLMLLASNFLLWKNVAPVPMYASLDEYGEMSIYDLLDHVTILSHNVSELTAEMHRIFMEDVRYKPGRWFSDRYLTACHTSTLTISVSKEGARQMPGVFLVKEMISMLTAWRYPLYHIITELSYMEQAPDEIISRARNIEEKIIVLIEALRGILSKIQPGPPENERYPVWNELASLQSPDEDLRHLTLFNLFQCLVKDSRKIDSSIRLLKCKLLYNRDC</sequence>
<keyword id="KW-1015">Disulfide bond</keyword>
<keyword id="KW-0325">Glycoprotein</keyword>
<keyword id="KW-0372">Hormone</keyword>
<keyword id="KW-1185">Reference proteome</keyword>
<keyword id="KW-0964">Secreted</keyword>
<keyword id="KW-0732">Signal</keyword>